<gene>
    <name evidence="1" type="primary">acpP</name>
    <name type="synonym">hmrB</name>
    <name type="ordered locus">MW1115</name>
</gene>
<evidence type="ECO:0000255" key="1">
    <source>
        <dbReference type="HAMAP-Rule" id="MF_01217"/>
    </source>
</evidence>
<evidence type="ECO:0000255" key="2">
    <source>
        <dbReference type="PROSITE-ProRule" id="PRU00258"/>
    </source>
</evidence>
<comment type="function">
    <text evidence="1">Carrier of the growing fatty acid chain in fatty acid biosynthesis. Is able to confer high methicillin resistance to S.aureus when overproduced (By similarity).</text>
</comment>
<comment type="pathway">
    <text evidence="1">Lipid metabolism; fatty acid biosynthesis.</text>
</comment>
<comment type="subcellular location">
    <subcellularLocation>
        <location evidence="1">Cytoplasm</location>
    </subcellularLocation>
</comment>
<comment type="PTM">
    <text evidence="1">4'-phosphopantetheine is transferred from CoA to a specific serine of apo-ACP by AcpS. This modification is essential for activity because fatty acids are bound in thioester linkage to the sulfhydryl of the prosthetic group.</text>
</comment>
<comment type="similarity">
    <text evidence="1">Belongs to the acyl carrier protein (ACP) family.</text>
</comment>
<reference key="1">
    <citation type="journal article" date="2002" name="Lancet">
        <title>Genome and virulence determinants of high virulence community-acquired MRSA.</title>
        <authorList>
            <person name="Baba T."/>
            <person name="Takeuchi F."/>
            <person name="Kuroda M."/>
            <person name="Yuzawa H."/>
            <person name="Aoki K."/>
            <person name="Oguchi A."/>
            <person name="Nagai Y."/>
            <person name="Iwama N."/>
            <person name="Asano K."/>
            <person name="Naimi T."/>
            <person name="Kuroda H."/>
            <person name="Cui L."/>
            <person name="Yamamoto K."/>
            <person name="Hiramatsu K."/>
        </authorList>
    </citation>
    <scope>NUCLEOTIDE SEQUENCE [LARGE SCALE GENOMIC DNA]</scope>
    <source>
        <strain>MW2</strain>
    </source>
</reference>
<sequence>MENFDKVKDIIVDRLGVDADKVTEDASFKDDLGADSLDIAELVMELEDEFGTEIPDEEAEKINTVGDAVKFINSLEK</sequence>
<accession>P0A003</accession>
<accession>Q99QN7</accession>
<name>ACP_STAAW</name>
<dbReference type="EMBL" id="BA000033">
    <property type="protein sequence ID" value="BAB94980.1"/>
    <property type="molecule type" value="Genomic_DNA"/>
</dbReference>
<dbReference type="RefSeq" id="WP_000426914.1">
    <property type="nucleotide sequence ID" value="NC_003923.1"/>
</dbReference>
<dbReference type="SMR" id="P0A003"/>
<dbReference type="KEGG" id="sam:MW1115"/>
<dbReference type="HOGENOM" id="CLU_108696_5_1_9"/>
<dbReference type="UniPathway" id="UPA00094"/>
<dbReference type="GO" id="GO:0005829">
    <property type="term" value="C:cytosol"/>
    <property type="evidence" value="ECO:0007669"/>
    <property type="project" value="TreeGrafter"/>
</dbReference>
<dbReference type="GO" id="GO:0016020">
    <property type="term" value="C:membrane"/>
    <property type="evidence" value="ECO:0007669"/>
    <property type="project" value="GOC"/>
</dbReference>
<dbReference type="GO" id="GO:0000035">
    <property type="term" value="F:acyl binding"/>
    <property type="evidence" value="ECO:0007669"/>
    <property type="project" value="TreeGrafter"/>
</dbReference>
<dbReference type="GO" id="GO:0000036">
    <property type="term" value="F:acyl carrier activity"/>
    <property type="evidence" value="ECO:0007669"/>
    <property type="project" value="UniProtKB-UniRule"/>
</dbReference>
<dbReference type="GO" id="GO:0009245">
    <property type="term" value="P:lipid A biosynthetic process"/>
    <property type="evidence" value="ECO:0007669"/>
    <property type="project" value="TreeGrafter"/>
</dbReference>
<dbReference type="GO" id="GO:0046677">
    <property type="term" value="P:response to antibiotic"/>
    <property type="evidence" value="ECO:0007669"/>
    <property type="project" value="UniProtKB-KW"/>
</dbReference>
<dbReference type="FunFam" id="1.10.1200.10:FF:000001">
    <property type="entry name" value="Acyl carrier protein"/>
    <property type="match status" value="1"/>
</dbReference>
<dbReference type="Gene3D" id="1.10.1200.10">
    <property type="entry name" value="ACP-like"/>
    <property type="match status" value="1"/>
</dbReference>
<dbReference type="HAMAP" id="MF_01217">
    <property type="entry name" value="Acyl_carrier"/>
    <property type="match status" value="1"/>
</dbReference>
<dbReference type="InterPro" id="IPR003231">
    <property type="entry name" value="ACP"/>
</dbReference>
<dbReference type="InterPro" id="IPR036736">
    <property type="entry name" value="ACP-like_sf"/>
</dbReference>
<dbReference type="InterPro" id="IPR009081">
    <property type="entry name" value="PP-bd_ACP"/>
</dbReference>
<dbReference type="InterPro" id="IPR006162">
    <property type="entry name" value="Ppantetheine_attach_site"/>
</dbReference>
<dbReference type="NCBIfam" id="TIGR00517">
    <property type="entry name" value="acyl_carrier"/>
    <property type="match status" value="1"/>
</dbReference>
<dbReference type="NCBIfam" id="NF002148">
    <property type="entry name" value="PRK00982.1-2"/>
    <property type="match status" value="1"/>
</dbReference>
<dbReference type="NCBIfam" id="NF002150">
    <property type="entry name" value="PRK00982.1-4"/>
    <property type="match status" value="1"/>
</dbReference>
<dbReference type="NCBIfam" id="NF002151">
    <property type="entry name" value="PRK00982.1-5"/>
    <property type="match status" value="1"/>
</dbReference>
<dbReference type="PANTHER" id="PTHR20863">
    <property type="entry name" value="ACYL CARRIER PROTEIN"/>
    <property type="match status" value="1"/>
</dbReference>
<dbReference type="PANTHER" id="PTHR20863:SF76">
    <property type="entry name" value="CARRIER DOMAIN-CONTAINING PROTEIN"/>
    <property type="match status" value="1"/>
</dbReference>
<dbReference type="Pfam" id="PF00550">
    <property type="entry name" value="PP-binding"/>
    <property type="match status" value="1"/>
</dbReference>
<dbReference type="SUPFAM" id="SSF47336">
    <property type="entry name" value="ACP-like"/>
    <property type="match status" value="1"/>
</dbReference>
<dbReference type="PROSITE" id="PS50075">
    <property type="entry name" value="CARRIER"/>
    <property type="match status" value="1"/>
</dbReference>
<dbReference type="PROSITE" id="PS00012">
    <property type="entry name" value="PHOSPHOPANTETHEINE"/>
    <property type="match status" value="1"/>
</dbReference>
<feature type="chain" id="PRO_0000180193" description="Acyl carrier protein">
    <location>
        <begin position="1"/>
        <end position="77"/>
    </location>
</feature>
<feature type="domain" description="Carrier" evidence="2">
    <location>
        <begin position="1"/>
        <end position="76"/>
    </location>
</feature>
<feature type="modified residue" description="O-(pantetheine 4'-phosphoryl)serine" evidence="2">
    <location>
        <position position="36"/>
    </location>
</feature>
<keyword id="KW-0046">Antibiotic resistance</keyword>
<keyword id="KW-0963">Cytoplasm</keyword>
<keyword id="KW-0275">Fatty acid biosynthesis</keyword>
<keyword id="KW-0276">Fatty acid metabolism</keyword>
<keyword id="KW-0444">Lipid biosynthesis</keyword>
<keyword id="KW-0443">Lipid metabolism</keyword>
<keyword id="KW-0596">Phosphopantetheine</keyword>
<keyword id="KW-0597">Phosphoprotein</keyword>
<protein>
    <recommendedName>
        <fullName evidence="1">Acyl carrier protein</fullName>
        <shortName evidence="1">ACP</shortName>
    </recommendedName>
</protein>
<organism>
    <name type="scientific">Staphylococcus aureus (strain MW2)</name>
    <dbReference type="NCBI Taxonomy" id="196620"/>
    <lineage>
        <taxon>Bacteria</taxon>
        <taxon>Bacillati</taxon>
        <taxon>Bacillota</taxon>
        <taxon>Bacilli</taxon>
        <taxon>Bacillales</taxon>
        <taxon>Staphylococcaceae</taxon>
        <taxon>Staphylococcus</taxon>
    </lineage>
</organism>
<proteinExistence type="inferred from homology"/>